<sequence>MQRVVFPNKILPYLLVAPQIVLTIVFFFWPASQALYQSVIREDPFGLKSGFVGFANFSAVLSEANYLNSLKVTVIFSVLTALLAMGVALLLATAADRVVRGKTFYRTLLIWPYAVAPAVAGMLWLFMFNPAMGTFAYMLRRNGFHWDPLLNGNHAMILIVVAAAWKQISYNFLFFVAGLQAIPKSLIEAAAIDGARGTRRFWTIIFPLLAPTTFFLLVVNTVYAFFDTFGIIHSVTGGGPARATETLVYKVYNDGFVNLNLGSSAAQSVILMAIVIGLTAFQFRFVEKRVHYG</sequence>
<organism>
    <name type="scientific">Rhizobium meliloti (strain 1021)</name>
    <name type="common">Ensifer meliloti</name>
    <name type="synonym">Sinorhizobium meliloti</name>
    <dbReference type="NCBI Taxonomy" id="266834"/>
    <lineage>
        <taxon>Bacteria</taxon>
        <taxon>Pseudomonadati</taxon>
        <taxon>Pseudomonadota</taxon>
        <taxon>Alphaproteobacteria</taxon>
        <taxon>Hyphomicrobiales</taxon>
        <taxon>Rhizobiaceae</taxon>
        <taxon>Sinorhizobium/Ensifer group</taxon>
        <taxon>Sinorhizobium</taxon>
    </lineage>
</organism>
<gene>
    <name type="primary">ugpA</name>
    <name type="ordered locus">RB0403</name>
    <name type="ORF">SMb20417</name>
</gene>
<reference key="1">
    <citation type="journal article" date="2001" name="Proc. Natl. Acad. Sci. U.S.A.">
        <title>The complete sequence of the 1,683-kb pSymB megaplasmid from the N2-fixing endosymbiont Sinorhizobium meliloti.</title>
        <authorList>
            <person name="Finan T.M."/>
            <person name="Weidner S."/>
            <person name="Wong K."/>
            <person name="Buhrmester J."/>
            <person name="Chain P."/>
            <person name="Vorhoelter F.J."/>
            <person name="Hernandez-Lucas I."/>
            <person name="Becker A."/>
            <person name="Cowie A."/>
            <person name="Gouzy J."/>
            <person name="Golding B."/>
            <person name="Puehler A."/>
        </authorList>
    </citation>
    <scope>NUCLEOTIDE SEQUENCE [LARGE SCALE GENOMIC DNA]</scope>
    <source>
        <strain>1021</strain>
    </source>
</reference>
<reference key="2">
    <citation type="journal article" date="2001" name="Science">
        <title>The composite genome of the legume symbiont Sinorhizobium meliloti.</title>
        <authorList>
            <person name="Galibert F."/>
            <person name="Finan T.M."/>
            <person name="Long S.R."/>
            <person name="Puehler A."/>
            <person name="Abola P."/>
            <person name="Ampe F."/>
            <person name="Barloy-Hubler F."/>
            <person name="Barnett M.J."/>
            <person name="Becker A."/>
            <person name="Boistard P."/>
            <person name="Bothe G."/>
            <person name="Boutry M."/>
            <person name="Bowser L."/>
            <person name="Buhrmester J."/>
            <person name="Cadieu E."/>
            <person name="Capela D."/>
            <person name="Chain P."/>
            <person name="Cowie A."/>
            <person name="Davis R.W."/>
            <person name="Dreano S."/>
            <person name="Federspiel N.A."/>
            <person name="Fisher R.F."/>
            <person name="Gloux S."/>
            <person name="Godrie T."/>
            <person name="Goffeau A."/>
            <person name="Golding B."/>
            <person name="Gouzy J."/>
            <person name="Gurjal M."/>
            <person name="Hernandez-Lucas I."/>
            <person name="Hong A."/>
            <person name="Huizar L."/>
            <person name="Hyman R.W."/>
            <person name="Jones T."/>
            <person name="Kahn D."/>
            <person name="Kahn M.L."/>
            <person name="Kalman S."/>
            <person name="Keating D.H."/>
            <person name="Kiss E."/>
            <person name="Komp C."/>
            <person name="Lelaure V."/>
            <person name="Masuy D."/>
            <person name="Palm C."/>
            <person name="Peck M.C."/>
            <person name="Pohl T.M."/>
            <person name="Portetelle D."/>
            <person name="Purnelle B."/>
            <person name="Ramsperger U."/>
            <person name="Surzycki R."/>
            <person name="Thebault P."/>
            <person name="Vandenbol M."/>
            <person name="Vorhoelter F.J."/>
            <person name="Weidner S."/>
            <person name="Wells D.H."/>
            <person name="Wong K."/>
            <person name="Yeh K.-C."/>
            <person name="Batut J."/>
        </authorList>
    </citation>
    <scope>NUCLEOTIDE SEQUENCE [LARGE SCALE GENOMIC DNA]</scope>
    <source>
        <strain>1021</strain>
    </source>
</reference>
<dbReference type="EMBL" id="AL591985">
    <property type="protein sequence ID" value="CAC48803.1"/>
    <property type="molecule type" value="Genomic_DNA"/>
</dbReference>
<dbReference type="PIR" id="C95892">
    <property type="entry name" value="C95892"/>
</dbReference>
<dbReference type="RefSeq" id="NP_436943.1">
    <property type="nucleotide sequence ID" value="NC_003078.1"/>
</dbReference>
<dbReference type="RefSeq" id="WP_010975291.1">
    <property type="nucleotide sequence ID" value="NC_003078.1"/>
</dbReference>
<dbReference type="SMR" id="Q92WD8"/>
<dbReference type="EnsemblBacteria" id="CAC48803">
    <property type="protein sequence ID" value="CAC48803"/>
    <property type="gene ID" value="SM_b20417"/>
</dbReference>
<dbReference type="KEGG" id="sme:SM_b20417"/>
<dbReference type="PATRIC" id="fig|266834.11.peg.5332"/>
<dbReference type="eggNOG" id="COG1175">
    <property type="taxonomic scope" value="Bacteria"/>
</dbReference>
<dbReference type="HOGENOM" id="CLU_016047_0_2_5"/>
<dbReference type="OrthoDB" id="9773727at2"/>
<dbReference type="Proteomes" id="UP000001976">
    <property type="component" value="Plasmid pSymB"/>
</dbReference>
<dbReference type="GO" id="GO:0005886">
    <property type="term" value="C:plasma membrane"/>
    <property type="evidence" value="ECO:0007669"/>
    <property type="project" value="UniProtKB-SubCell"/>
</dbReference>
<dbReference type="GO" id="GO:0055085">
    <property type="term" value="P:transmembrane transport"/>
    <property type="evidence" value="ECO:0007669"/>
    <property type="project" value="InterPro"/>
</dbReference>
<dbReference type="CDD" id="cd06261">
    <property type="entry name" value="TM_PBP2"/>
    <property type="match status" value="1"/>
</dbReference>
<dbReference type="Gene3D" id="1.10.3720.10">
    <property type="entry name" value="MetI-like"/>
    <property type="match status" value="1"/>
</dbReference>
<dbReference type="InterPro" id="IPR000515">
    <property type="entry name" value="MetI-like"/>
</dbReference>
<dbReference type="InterPro" id="IPR035906">
    <property type="entry name" value="MetI-like_sf"/>
</dbReference>
<dbReference type="InterPro" id="IPR050809">
    <property type="entry name" value="UgpAE/MalFG_permease"/>
</dbReference>
<dbReference type="NCBIfam" id="NF007852">
    <property type="entry name" value="PRK10561.1"/>
    <property type="match status" value="1"/>
</dbReference>
<dbReference type="PANTHER" id="PTHR43227">
    <property type="entry name" value="BLL4140 PROTEIN"/>
    <property type="match status" value="1"/>
</dbReference>
<dbReference type="PANTHER" id="PTHR43227:SF9">
    <property type="entry name" value="SN-GLYCEROL-3-PHOSPHATE TRANSPORT SYSTEM PERMEASE PROTEIN UGPA"/>
    <property type="match status" value="1"/>
</dbReference>
<dbReference type="Pfam" id="PF00528">
    <property type="entry name" value="BPD_transp_1"/>
    <property type="match status" value="1"/>
</dbReference>
<dbReference type="SUPFAM" id="SSF161098">
    <property type="entry name" value="MetI-like"/>
    <property type="match status" value="1"/>
</dbReference>
<dbReference type="PROSITE" id="PS50928">
    <property type="entry name" value="ABC_TM1"/>
    <property type="match status" value="1"/>
</dbReference>
<comment type="function">
    <text evidence="1">Part of the ABC transporter complex UgpBAEC involved in sn-glycerol-3-phosphate (G3P) import. Probably responsible for the translocation of the substrate across the membrane.</text>
</comment>
<comment type="subunit">
    <text evidence="1">The complex is composed of two ATP-binding proteins (UgpC), two transmembrane proteins (UgpA and UgpE) and a solute-binding protein (UgpB).</text>
</comment>
<comment type="subcellular location">
    <subcellularLocation>
        <location evidence="1">Cell inner membrane</location>
        <topology evidence="2">Multi-pass membrane protein</topology>
    </subcellularLocation>
</comment>
<comment type="similarity">
    <text evidence="4">Belongs to the binding-protein-dependent transport system permease family.</text>
</comment>
<evidence type="ECO:0000250" key="1">
    <source>
        <dbReference type="UniProtKB" id="P10905"/>
    </source>
</evidence>
<evidence type="ECO:0000255" key="2"/>
<evidence type="ECO:0000255" key="3">
    <source>
        <dbReference type="PROSITE-ProRule" id="PRU00441"/>
    </source>
</evidence>
<evidence type="ECO:0000305" key="4"/>
<keyword id="KW-0997">Cell inner membrane</keyword>
<keyword id="KW-1003">Cell membrane</keyword>
<keyword id="KW-0472">Membrane</keyword>
<keyword id="KW-0614">Plasmid</keyword>
<keyword id="KW-1185">Reference proteome</keyword>
<keyword id="KW-0812">Transmembrane</keyword>
<keyword id="KW-1133">Transmembrane helix</keyword>
<keyword id="KW-0813">Transport</keyword>
<protein>
    <recommendedName>
        <fullName evidence="1">sn-glycerol-3-phosphate transport system permease protein UgpA</fullName>
    </recommendedName>
</protein>
<proteinExistence type="inferred from homology"/>
<name>UGPA_RHIME</name>
<accession>Q92WD8</accession>
<feature type="chain" id="PRO_0000290135" description="sn-glycerol-3-phosphate transport system permease protein UgpA">
    <location>
        <begin position="1"/>
        <end position="293"/>
    </location>
</feature>
<feature type="transmembrane region" description="Helical" evidence="3">
    <location>
        <begin position="10"/>
        <end position="30"/>
    </location>
</feature>
<feature type="transmembrane region" description="Helical" evidence="3">
    <location>
        <begin position="72"/>
        <end position="92"/>
    </location>
</feature>
<feature type="transmembrane region" description="Helical" evidence="3">
    <location>
        <begin position="108"/>
        <end position="128"/>
    </location>
</feature>
<feature type="transmembrane region" description="Helical" evidence="3">
    <location>
        <begin position="156"/>
        <end position="176"/>
    </location>
</feature>
<feature type="transmembrane region" description="Helical" evidence="3">
    <location>
        <begin position="204"/>
        <end position="224"/>
    </location>
</feature>
<feature type="transmembrane region" description="Helical" evidence="3">
    <location>
        <begin position="261"/>
        <end position="281"/>
    </location>
</feature>
<feature type="domain" description="ABC transmembrane type-1" evidence="3">
    <location>
        <begin position="66"/>
        <end position="282"/>
    </location>
</feature>
<geneLocation type="plasmid">
    <name>pSymB</name>
    <name>megaplasmid 2</name>
</geneLocation>